<accession>A5V804</accession>
<dbReference type="EMBL" id="CP000699">
    <property type="protein sequence ID" value="ABQ68420.1"/>
    <property type="molecule type" value="Genomic_DNA"/>
</dbReference>
<dbReference type="STRING" id="392499.Swit_2061"/>
<dbReference type="PaxDb" id="392499-Swit_2061"/>
<dbReference type="KEGG" id="swi:Swit_2061"/>
<dbReference type="eggNOG" id="COG3158">
    <property type="taxonomic scope" value="Bacteria"/>
</dbReference>
<dbReference type="HOGENOM" id="CLU_008142_4_2_5"/>
<dbReference type="OrthoDB" id="9805577at2"/>
<dbReference type="Proteomes" id="UP000001989">
    <property type="component" value="Chromosome"/>
</dbReference>
<dbReference type="GO" id="GO:0005886">
    <property type="term" value="C:plasma membrane"/>
    <property type="evidence" value="ECO:0007669"/>
    <property type="project" value="UniProtKB-SubCell"/>
</dbReference>
<dbReference type="GO" id="GO:0015079">
    <property type="term" value="F:potassium ion transmembrane transporter activity"/>
    <property type="evidence" value="ECO:0007669"/>
    <property type="project" value="UniProtKB-UniRule"/>
</dbReference>
<dbReference type="GO" id="GO:0015293">
    <property type="term" value="F:symporter activity"/>
    <property type="evidence" value="ECO:0007669"/>
    <property type="project" value="UniProtKB-UniRule"/>
</dbReference>
<dbReference type="HAMAP" id="MF_01522">
    <property type="entry name" value="Kup"/>
    <property type="match status" value="1"/>
</dbReference>
<dbReference type="InterPro" id="IPR003855">
    <property type="entry name" value="K+_transporter"/>
</dbReference>
<dbReference type="InterPro" id="IPR053952">
    <property type="entry name" value="K_trans_C"/>
</dbReference>
<dbReference type="InterPro" id="IPR053951">
    <property type="entry name" value="K_trans_N"/>
</dbReference>
<dbReference type="InterPro" id="IPR023051">
    <property type="entry name" value="Kup"/>
</dbReference>
<dbReference type="PANTHER" id="PTHR30540:SF79">
    <property type="entry name" value="LOW AFFINITY POTASSIUM TRANSPORT SYSTEM PROTEIN KUP"/>
    <property type="match status" value="1"/>
</dbReference>
<dbReference type="PANTHER" id="PTHR30540">
    <property type="entry name" value="OSMOTIC STRESS POTASSIUM TRANSPORTER"/>
    <property type="match status" value="1"/>
</dbReference>
<dbReference type="Pfam" id="PF02705">
    <property type="entry name" value="K_trans"/>
    <property type="match status" value="1"/>
</dbReference>
<dbReference type="Pfam" id="PF22776">
    <property type="entry name" value="K_trans_C"/>
    <property type="match status" value="1"/>
</dbReference>
<protein>
    <recommendedName>
        <fullName evidence="1">Probable potassium transport system protein Kup 2</fullName>
    </recommendedName>
</protein>
<evidence type="ECO:0000255" key="1">
    <source>
        <dbReference type="HAMAP-Rule" id="MF_01522"/>
    </source>
</evidence>
<evidence type="ECO:0000256" key="2">
    <source>
        <dbReference type="SAM" id="MobiDB-lite"/>
    </source>
</evidence>
<sequence>MSSDAAAVADRDGSSPGHGGHAHGSLGAMVVGAVGVVFGDIGTSPLYAFRETFAGHHPLPPDELHILGVLSLIFWSMMLVVTFKYVAIIMRADNKGEGGSLALLALINRKSEGKRWGKGIILLGVFATALFYGDSMITPAISVLSAVEGLTTVEAGFAPMVLPIAVGILIALFMIQSRGTAKVGMLFGPIMMIYFTTLGVLGTWHIIGNPHVLIALNPWYAVRFFMEEGTLAFLAMGSVVLAVTGAEALYADMGHFGRRPIGLSWLVFVLPALMLNYLGQGAMILSQDMATALRTIHNPFFLLAPEMLRLPLVILATMATVIASQAVITGAFSVTQQAIQLGFIPRLRITHTSAGSIGQIYIPAINWGLMVMVILLVMSFRTSSNLAAAYGIAVTGAMAIDTCLIAVVLIHLWGWNKALAAPLIAVFAAVDIAYFGANLTKVPDGGWFPLLIGFIAFTLLTTWGRGRMLMINRLREAAMPVKVFVQSAVNSAVRVPGTAVFMTSQAQGVPHALLHNLKHNKVLHERVILLTVKIADAPYVPESHRVDFADLGQGFYRIVINYGFMEDPDVPAVLSRTRTCGPEFKMMDTSFFLARQTLLPSERPAMAIWREKLFAWMLRNAESAMEFFKLPTNRVVELGSQVEI</sequence>
<proteinExistence type="inferred from homology"/>
<reference key="1">
    <citation type="journal article" date="2010" name="J. Bacteriol.">
        <title>Genome sequence of the dioxin-mineralizing bacterium Sphingomonas wittichii RW1.</title>
        <authorList>
            <person name="Miller T.R."/>
            <person name="Delcher A.L."/>
            <person name="Salzberg S.L."/>
            <person name="Saunders E."/>
            <person name="Detter J.C."/>
            <person name="Halden R.U."/>
        </authorList>
    </citation>
    <scope>NUCLEOTIDE SEQUENCE [LARGE SCALE GENOMIC DNA]</scope>
    <source>
        <strain>DSM 6014 / CCUG 31198 / JCM 15750 / NBRC 105917 / EY 4224 / RW1</strain>
    </source>
</reference>
<feature type="chain" id="PRO_0000315994" description="Probable potassium transport system protein Kup 2">
    <location>
        <begin position="1"/>
        <end position="644"/>
    </location>
</feature>
<feature type="transmembrane region" description="Helical" evidence="1">
    <location>
        <begin position="26"/>
        <end position="46"/>
    </location>
</feature>
<feature type="transmembrane region" description="Helical" evidence="1">
    <location>
        <begin position="69"/>
        <end position="89"/>
    </location>
</feature>
<feature type="transmembrane region" description="Helical" evidence="1">
    <location>
        <begin position="120"/>
        <end position="140"/>
    </location>
</feature>
<feature type="transmembrane region" description="Helical" evidence="1">
    <location>
        <begin position="155"/>
        <end position="175"/>
    </location>
</feature>
<feature type="transmembrane region" description="Helical" evidence="1">
    <location>
        <begin position="183"/>
        <end position="203"/>
    </location>
</feature>
<feature type="transmembrane region" description="Helical" evidence="1">
    <location>
        <begin position="231"/>
        <end position="251"/>
    </location>
</feature>
<feature type="transmembrane region" description="Helical" evidence="1">
    <location>
        <begin position="265"/>
        <end position="285"/>
    </location>
</feature>
<feature type="transmembrane region" description="Helical" evidence="1">
    <location>
        <begin position="312"/>
        <end position="332"/>
    </location>
</feature>
<feature type="transmembrane region" description="Helical" evidence="1">
    <location>
        <begin position="360"/>
        <end position="380"/>
    </location>
</feature>
<feature type="transmembrane region" description="Helical" evidence="1">
    <location>
        <begin position="390"/>
        <end position="410"/>
    </location>
</feature>
<feature type="transmembrane region" description="Helical" evidence="1">
    <location>
        <begin position="419"/>
        <end position="439"/>
    </location>
</feature>
<feature type="transmembrane region" description="Helical" evidence="1">
    <location>
        <begin position="444"/>
        <end position="464"/>
    </location>
</feature>
<feature type="region of interest" description="Disordered" evidence="2">
    <location>
        <begin position="1"/>
        <end position="21"/>
    </location>
</feature>
<keyword id="KW-0997">Cell inner membrane</keyword>
<keyword id="KW-1003">Cell membrane</keyword>
<keyword id="KW-0406">Ion transport</keyword>
<keyword id="KW-0472">Membrane</keyword>
<keyword id="KW-0630">Potassium</keyword>
<keyword id="KW-0633">Potassium transport</keyword>
<keyword id="KW-1185">Reference proteome</keyword>
<keyword id="KW-0769">Symport</keyword>
<keyword id="KW-0812">Transmembrane</keyword>
<keyword id="KW-1133">Transmembrane helix</keyword>
<keyword id="KW-0813">Transport</keyword>
<gene>
    <name evidence="1" type="primary">kup2</name>
    <name type="ordered locus">Swit_2061</name>
</gene>
<comment type="function">
    <text evidence="1">Transport of potassium into the cell. Likely operates as a K(+):H(+) symporter.</text>
</comment>
<comment type="catalytic activity">
    <reaction evidence="1">
        <text>K(+)(in) + H(+)(in) = K(+)(out) + H(+)(out)</text>
        <dbReference type="Rhea" id="RHEA:28490"/>
        <dbReference type="ChEBI" id="CHEBI:15378"/>
        <dbReference type="ChEBI" id="CHEBI:29103"/>
    </reaction>
    <physiologicalReaction direction="right-to-left" evidence="1">
        <dbReference type="Rhea" id="RHEA:28492"/>
    </physiologicalReaction>
</comment>
<comment type="subcellular location">
    <subcellularLocation>
        <location evidence="1">Cell inner membrane</location>
        <topology evidence="1">Multi-pass membrane protein</topology>
    </subcellularLocation>
</comment>
<comment type="similarity">
    <text evidence="1">Belongs to the HAK/KUP transporter (TC 2.A.72) family.</text>
</comment>
<organism>
    <name type="scientific">Rhizorhabdus wittichii (strain DSM 6014 / CCUG 31198 / JCM 15750 / NBRC 105917 / EY 4224 / RW1)</name>
    <name type="common">Sphingomonas wittichii</name>
    <dbReference type="NCBI Taxonomy" id="392499"/>
    <lineage>
        <taxon>Bacteria</taxon>
        <taxon>Pseudomonadati</taxon>
        <taxon>Pseudomonadota</taxon>
        <taxon>Alphaproteobacteria</taxon>
        <taxon>Sphingomonadales</taxon>
        <taxon>Sphingomonadaceae</taxon>
        <taxon>Rhizorhabdus</taxon>
    </lineage>
</organism>
<name>KUP2_RHIWR</name>